<organism>
    <name type="scientific">Populus trichocarpa</name>
    <name type="common">Western balsam poplar</name>
    <name type="synonym">Populus balsamifera subsp. trichocarpa</name>
    <dbReference type="NCBI Taxonomy" id="3694"/>
    <lineage>
        <taxon>Eukaryota</taxon>
        <taxon>Viridiplantae</taxon>
        <taxon>Streptophyta</taxon>
        <taxon>Embryophyta</taxon>
        <taxon>Tracheophyta</taxon>
        <taxon>Spermatophyta</taxon>
        <taxon>Magnoliopsida</taxon>
        <taxon>eudicotyledons</taxon>
        <taxon>Gunneridae</taxon>
        <taxon>Pentapetalae</taxon>
        <taxon>rosids</taxon>
        <taxon>fabids</taxon>
        <taxon>Malpighiales</taxon>
        <taxon>Salicaceae</taxon>
        <taxon>Saliceae</taxon>
        <taxon>Populus</taxon>
    </lineage>
</organism>
<keyword id="KW-0119">Carbohydrate metabolism</keyword>
<keyword id="KW-0146">Chitin degradation</keyword>
<keyword id="KW-0147">Chitin-binding</keyword>
<keyword id="KW-1015">Disulfide bond</keyword>
<keyword id="KW-0326">Glycosidase</keyword>
<keyword id="KW-0378">Hydrolase</keyword>
<keyword id="KW-0611">Plant defense</keyword>
<keyword id="KW-0624">Polysaccharide degradation</keyword>
<keyword id="KW-1185">Reference proteome</keyword>
<keyword id="KW-0732">Signal</keyword>
<accession>P16061</accession>
<protein>
    <recommendedName>
        <fullName>Endochitinase WIN8</fullName>
        <ecNumber>3.2.1.14</ecNumber>
    </recommendedName>
</protein>
<evidence type="ECO:0000250" key="1">
    <source>
        <dbReference type="UniProtKB" id="P29022"/>
    </source>
</evidence>
<evidence type="ECO:0000255" key="2"/>
<evidence type="ECO:0000255" key="3">
    <source>
        <dbReference type="PROSITE-ProRule" id="PRU00261"/>
    </source>
</evidence>
<evidence type="ECO:0000305" key="4"/>
<name>CHI8_POPTR</name>
<gene>
    <name type="primary">WIN8</name>
</gene>
<proteinExistence type="evidence at transcript level"/>
<reference key="1">
    <citation type="journal article" date="1989" name="Proc. Natl. Acad. Sci. U.S.A.">
        <title>Systemic accumulation of specific mRNAs in response to wounding in poplar trees.</title>
        <authorList>
            <person name="Parsons T.J."/>
            <person name="Bradshaw H.D. Jr."/>
            <person name="Gordon M.P."/>
        </authorList>
    </citation>
    <scope>NUCLEOTIDE SEQUENCE [MRNA]</scope>
</reference>
<reference key="2">
    <citation type="journal article" date="2006" name="Science">
        <title>The genome of black cottonwood, Populus trichocarpa (Torr. &amp; Gray).</title>
        <authorList>
            <person name="Tuskan G.A."/>
            <person name="Difazio S."/>
            <person name="Jansson S."/>
            <person name="Bohlmann J."/>
            <person name="Grigoriev I."/>
            <person name="Hellsten U."/>
            <person name="Putnam N."/>
            <person name="Ralph S."/>
            <person name="Rombauts S."/>
            <person name="Salamov A."/>
            <person name="Schein J."/>
            <person name="Sterck L."/>
            <person name="Aerts A."/>
            <person name="Bhalerao R.R."/>
            <person name="Bhalerao R.P."/>
            <person name="Blaudez D."/>
            <person name="Boerjan W."/>
            <person name="Brun A."/>
            <person name="Brunner A."/>
            <person name="Busov V."/>
            <person name="Campbell M."/>
            <person name="Carlson J."/>
            <person name="Chalot M."/>
            <person name="Chapman J."/>
            <person name="Chen G.-L."/>
            <person name="Cooper D."/>
            <person name="Coutinho P.M."/>
            <person name="Couturier J."/>
            <person name="Covert S."/>
            <person name="Cronk Q."/>
            <person name="Cunningham R."/>
            <person name="Davis J."/>
            <person name="Degroeve S."/>
            <person name="Dejardin A."/>
            <person name="dePamphilis C.W."/>
            <person name="Detter J."/>
            <person name="Dirks B."/>
            <person name="Dubchak I."/>
            <person name="Duplessis S."/>
            <person name="Ehlting J."/>
            <person name="Ellis B."/>
            <person name="Gendler K."/>
            <person name="Goodstein D."/>
            <person name="Gribskov M."/>
            <person name="Grimwood J."/>
            <person name="Groover A."/>
            <person name="Gunter L."/>
            <person name="Hamberger B."/>
            <person name="Heinze B."/>
            <person name="Helariutta Y."/>
            <person name="Henrissat B."/>
            <person name="Holligan D."/>
            <person name="Holt R."/>
            <person name="Huang W."/>
            <person name="Islam-Faridi N."/>
            <person name="Jones S."/>
            <person name="Jones-Rhoades M."/>
            <person name="Jorgensen R."/>
            <person name="Joshi C."/>
            <person name="Kangasjaervi J."/>
            <person name="Karlsson J."/>
            <person name="Kelleher C."/>
            <person name="Kirkpatrick R."/>
            <person name="Kirst M."/>
            <person name="Kohler A."/>
            <person name="Kalluri U."/>
            <person name="Larimer F."/>
            <person name="Leebens-Mack J."/>
            <person name="Leple J.-C."/>
            <person name="Locascio P."/>
            <person name="Lou Y."/>
            <person name="Lucas S."/>
            <person name="Martin F."/>
            <person name="Montanini B."/>
            <person name="Napoli C."/>
            <person name="Nelson D.R."/>
            <person name="Nelson C."/>
            <person name="Nieminen K."/>
            <person name="Nilsson O."/>
            <person name="Pereda V."/>
            <person name="Peter G."/>
            <person name="Philippe R."/>
            <person name="Pilate G."/>
            <person name="Poliakov A."/>
            <person name="Razumovskaya J."/>
            <person name="Richardson P."/>
            <person name="Rinaldi C."/>
            <person name="Ritland K."/>
            <person name="Rouze P."/>
            <person name="Ryaboy D."/>
            <person name="Schmutz J."/>
            <person name="Schrader J."/>
            <person name="Segerman B."/>
            <person name="Shin H."/>
            <person name="Siddiqui A."/>
            <person name="Sterky F."/>
            <person name="Terry A."/>
            <person name="Tsai C.-J."/>
            <person name="Uberbacher E."/>
            <person name="Unneberg P."/>
            <person name="Vahala J."/>
            <person name="Wall K."/>
            <person name="Wessler S."/>
            <person name="Yang G."/>
            <person name="Yin T."/>
            <person name="Douglas C."/>
            <person name="Marra M."/>
            <person name="Sandberg G."/>
            <person name="Van de Peer Y."/>
            <person name="Rokhsar D.S."/>
        </authorList>
    </citation>
    <scope>NUCLEOTIDE SEQUENCE [LARGE SCALE GENOMIC DNA]</scope>
    <source>
        <strain>cv. Nisqually</strain>
    </source>
</reference>
<comment type="function">
    <text>Defense against chitin-containing fungal pathogens.</text>
</comment>
<comment type="catalytic activity">
    <reaction>
        <text>Random endo-hydrolysis of N-acetyl-beta-D-glucosaminide (1-&gt;4)-beta-linkages in chitin and chitodextrins.</text>
        <dbReference type="EC" id="3.2.1.14"/>
    </reaction>
</comment>
<comment type="similarity">
    <text evidence="4">Belongs to the glycosyl hydrolase 19 family. Chitinase class I subfamily.</text>
</comment>
<dbReference type="EC" id="3.2.1.14"/>
<dbReference type="EMBL" id="M25337">
    <property type="protein sequence ID" value="AAA96702.1"/>
    <property type="molecule type" value="mRNA"/>
</dbReference>
<dbReference type="EMBL" id="CM009293">
    <property type="status" value="NOT_ANNOTATED_CDS"/>
    <property type="molecule type" value="Genomic_DNA"/>
</dbReference>
<dbReference type="PIR" id="A33985">
    <property type="entry name" value="A33985"/>
</dbReference>
<dbReference type="SMR" id="P16061"/>
<dbReference type="CAZy" id="CBM18">
    <property type="family name" value="Carbohydrate-Binding Module Family 18"/>
</dbReference>
<dbReference type="CAZy" id="GH19">
    <property type="family name" value="Glycoside Hydrolase Family 19"/>
</dbReference>
<dbReference type="eggNOG" id="KOG4742">
    <property type="taxonomic scope" value="Eukaryota"/>
</dbReference>
<dbReference type="HOGENOM" id="CLU_045506_1_0_1"/>
<dbReference type="InParanoid" id="P16061"/>
<dbReference type="Proteomes" id="UP000006729">
    <property type="component" value="Chromosome 4"/>
</dbReference>
<dbReference type="ExpressionAtlas" id="P16061">
    <property type="expression patterns" value="baseline and differential"/>
</dbReference>
<dbReference type="GO" id="GO:0008061">
    <property type="term" value="F:chitin binding"/>
    <property type="evidence" value="ECO:0007669"/>
    <property type="project" value="UniProtKB-KW"/>
</dbReference>
<dbReference type="GO" id="GO:0004568">
    <property type="term" value="F:chitinase activity"/>
    <property type="evidence" value="ECO:0000318"/>
    <property type="project" value="GO_Central"/>
</dbReference>
<dbReference type="GO" id="GO:0008843">
    <property type="term" value="F:endochitinase activity"/>
    <property type="evidence" value="ECO:0007669"/>
    <property type="project" value="UniProtKB-EC"/>
</dbReference>
<dbReference type="GO" id="GO:0016998">
    <property type="term" value="P:cell wall macromolecule catabolic process"/>
    <property type="evidence" value="ECO:0007669"/>
    <property type="project" value="InterPro"/>
</dbReference>
<dbReference type="GO" id="GO:0006032">
    <property type="term" value="P:chitin catabolic process"/>
    <property type="evidence" value="ECO:0007669"/>
    <property type="project" value="UniProtKB-KW"/>
</dbReference>
<dbReference type="GO" id="GO:0050832">
    <property type="term" value="P:defense response to fungus"/>
    <property type="evidence" value="ECO:0000318"/>
    <property type="project" value="GO_Central"/>
</dbReference>
<dbReference type="GO" id="GO:0000272">
    <property type="term" value="P:polysaccharide catabolic process"/>
    <property type="evidence" value="ECO:0007669"/>
    <property type="project" value="UniProtKB-KW"/>
</dbReference>
<dbReference type="CDD" id="cd00325">
    <property type="entry name" value="chitinase_GH19"/>
    <property type="match status" value="1"/>
</dbReference>
<dbReference type="CDD" id="cd00035">
    <property type="entry name" value="ChtBD1"/>
    <property type="match status" value="1"/>
</dbReference>
<dbReference type="FunFam" id="3.30.20.10:FF:000001">
    <property type="entry name" value="Endochitinase (Chitinase)"/>
    <property type="match status" value="1"/>
</dbReference>
<dbReference type="Gene3D" id="1.10.530.10">
    <property type="match status" value="1"/>
</dbReference>
<dbReference type="Gene3D" id="3.30.20.10">
    <property type="entry name" value="Endochitinase, domain 2"/>
    <property type="match status" value="1"/>
</dbReference>
<dbReference type="Gene3D" id="3.30.60.10">
    <property type="entry name" value="Endochitinase-like"/>
    <property type="match status" value="1"/>
</dbReference>
<dbReference type="InterPro" id="IPR001002">
    <property type="entry name" value="Chitin-bd_1"/>
</dbReference>
<dbReference type="InterPro" id="IPR018371">
    <property type="entry name" value="Chitin-binding_1_CS"/>
</dbReference>
<dbReference type="InterPro" id="IPR036861">
    <property type="entry name" value="Endochitinase-like_sf"/>
</dbReference>
<dbReference type="InterPro" id="IPR016283">
    <property type="entry name" value="Glyco_hydro_19"/>
</dbReference>
<dbReference type="InterPro" id="IPR000726">
    <property type="entry name" value="Glyco_hydro_19_cat"/>
</dbReference>
<dbReference type="InterPro" id="IPR023346">
    <property type="entry name" value="Lysozyme-like_dom_sf"/>
</dbReference>
<dbReference type="PANTHER" id="PTHR22595:SF171">
    <property type="entry name" value="BASIC ENDOCHITINASE B"/>
    <property type="match status" value="1"/>
</dbReference>
<dbReference type="PANTHER" id="PTHR22595">
    <property type="entry name" value="CHITINASE-RELATED"/>
    <property type="match status" value="1"/>
</dbReference>
<dbReference type="Pfam" id="PF00187">
    <property type="entry name" value="Chitin_bind_1"/>
    <property type="match status" value="1"/>
</dbReference>
<dbReference type="Pfam" id="PF00182">
    <property type="entry name" value="Glyco_hydro_19"/>
    <property type="match status" value="1"/>
</dbReference>
<dbReference type="PIRSF" id="PIRSF001060">
    <property type="entry name" value="Endochitinase"/>
    <property type="match status" value="1"/>
</dbReference>
<dbReference type="SMART" id="SM00270">
    <property type="entry name" value="ChtBD1"/>
    <property type="match status" value="1"/>
</dbReference>
<dbReference type="SUPFAM" id="SSF53955">
    <property type="entry name" value="Lysozyme-like"/>
    <property type="match status" value="1"/>
</dbReference>
<dbReference type="SUPFAM" id="SSF57016">
    <property type="entry name" value="Plant lectins/antimicrobial peptides"/>
    <property type="match status" value="1"/>
</dbReference>
<dbReference type="PROSITE" id="PS00026">
    <property type="entry name" value="CHIT_BIND_I_1"/>
    <property type="match status" value="1"/>
</dbReference>
<dbReference type="PROSITE" id="PS50941">
    <property type="entry name" value="CHIT_BIND_I_2"/>
    <property type="match status" value="1"/>
</dbReference>
<dbReference type="PROSITE" id="PS00773">
    <property type="entry name" value="CHITINASE_19_1"/>
    <property type="match status" value="1"/>
</dbReference>
<dbReference type="PROSITE" id="PS00774">
    <property type="entry name" value="CHITINASE_19_2"/>
    <property type="match status" value="1"/>
</dbReference>
<sequence length="316" mass="35046">MRFWALTVLSLLLSLLLGVSSDTAQCGSQAGNATCPNDLCCSSGGYCGLTVAYCCAGCVSQCRNCFFTESMFEQMLPNRNNDSCPGKGFYTYDAYFVATEFYPGFGMTGDDDTRKRELAAFFAQTSQETSGRSIIGEDAPFTWGYCLVNELNPNSDYCDPKTKSSYPCVADYYGRGPLQLRWNYNYGECGNYLGQNLLDEPEKVATDPVLSFEAALWFWMNPHSTGAPSCHEVITGEWSPSEADIEAGRKPGFGMLTNIITNGGECTKDGKTRQQNRIDYYLRYCDMLQVDPGDNLYCDNQETFEDNGLLKMVGTM</sequence>
<feature type="signal peptide" evidence="2">
    <location>
        <begin position="1"/>
        <end position="23"/>
    </location>
</feature>
<feature type="chain" id="PRO_0000005319" description="Endochitinase WIN8">
    <location>
        <begin position="24"/>
        <end position="316"/>
    </location>
</feature>
<feature type="domain" description="Chitin-binding type-1" evidence="3">
    <location>
        <begin position="24"/>
        <end position="64"/>
    </location>
</feature>
<feature type="active site" description="Proton donor" evidence="1">
    <location>
        <position position="128"/>
    </location>
</feature>
<feature type="disulfide bond" evidence="3">
    <location>
        <begin position="26"/>
        <end position="41"/>
    </location>
</feature>
<feature type="disulfide bond" evidence="3">
    <location>
        <begin position="35"/>
        <end position="47"/>
    </location>
</feature>
<feature type="disulfide bond" evidence="3">
    <location>
        <begin position="40"/>
        <end position="54"/>
    </location>
</feature>
<feature type="disulfide bond" evidence="3">
    <location>
        <begin position="58"/>
        <end position="62"/>
    </location>
</feature>
<feature type="disulfide bond" evidence="3">
    <location>
        <begin position="84"/>
        <end position="146"/>
    </location>
</feature>
<feature type="disulfide bond" evidence="3">
    <location>
        <begin position="158"/>
        <end position="168"/>
    </location>
</feature>
<feature type="disulfide bond" evidence="3">
    <location>
        <begin position="266"/>
        <end position="298"/>
    </location>
</feature>